<evidence type="ECO:0000250" key="1">
    <source>
        <dbReference type="UniProtKB" id="P9WPG7"/>
    </source>
</evidence>
<evidence type="ECO:0000255" key="2"/>
<evidence type="ECO:0000255" key="3">
    <source>
        <dbReference type="HAMAP-Rule" id="MF_02241"/>
    </source>
</evidence>
<evidence type="ECO:0000269" key="4">
    <source>
    </source>
</evidence>
<evidence type="ECO:0000303" key="5">
    <source>
    </source>
</evidence>
<evidence type="ECO:0000305" key="6"/>
<evidence type="ECO:0000305" key="7">
    <source>
    </source>
</evidence>
<evidence type="ECO:0000312" key="8">
    <source>
        <dbReference type="EMBL" id="AAT82825.1"/>
    </source>
</evidence>
<protein>
    <recommendedName>
        <fullName evidence="5">Phosphatidylinositol phosphate synthase</fullName>
        <shortName evidence="5">PIP synthase</shortName>
        <ecNumber evidence="4">2.7.8.-</ecNumber>
    </recommendedName>
    <alternativeName>
        <fullName>CDP-diacylglycerol--D-myo-inositol-3-phosphate 3-phosphatidyltransferase</fullName>
    </alternativeName>
</protein>
<proteinExistence type="evidence at protein level"/>
<accession>Q6A8U1</accession>
<sequence>MLEHFRAGWAKVMNPIADALLRAHVTPDVVTWIGTIGAVLMALICFPQGWLWQGPWLVTLFIFSDSLDGNMARKLGRHSQWGSFLDSTLDRFGDAAIFTGVALYFAGPGNSVLWTAMACAALVFGMATSYVRAKAESLALEAKVGIATRADRLLVSLVAIEITGLARVGAFPHWCVVALPIALCYLTLAGAITVVQRMVAVRRACES</sequence>
<comment type="function">
    <text evidence="4">Catalyzes the conjugation of the 1'-hydroxyl group of D-myo-inositol-3-phosphate (also named L-myo-inositol-1-phosphate) with a lipid tail of cytidine diphosphate diacylglycerol (CDP-DAG), forming phosphatidylinositol phosphate (PIP) and CMP. PIP is a precursor of phosphatidylinositol (PI) which is an essential lipid required for cell wall formation.</text>
</comment>
<comment type="catalytic activity">
    <reaction evidence="4">
        <text>a CDP-1,2-diacyl-sn-glycerol + 1D-myo-inositol 3-phosphate = a 1,2-diacyl-sn-glycero-3-phospho-(1D-myo-inositol-3-phosphate) + CMP + H(+)</text>
        <dbReference type="Rhea" id="RHEA:60504"/>
        <dbReference type="ChEBI" id="CHEBI:15378"/>
        <dbReference type="ChEBI" id="CHEBI:58088"/>
        <dbReference type="ChEBI" id="CHEBI:58332"/>
        <dbReference type="ChEBI" id="CHEBI:58401"/>
        <dbReference type="ChEBI" id="CHEBI:60377"/>
    </reaction>
</comment>
<comment type="catalytic activity">
    <reaction evidence="4">
        <text>1,2-di-(9Z-octadecenoyl)-sn-glycero-3-cytidine-5'-diphosphate + 1D-myo-inositol 3-phosphate = 1,2-di-(9Z-octadecenoyl)-sn-glycero-3-phospho-(1D-myo-inositol-3-phosphate) + CMP + H(+)</text>
        <dbReference type="Rhea" id="RHEA:61216"/>
        <dbReference type="ChEBI" id="CHEBI:15378"/>
        <dbReference type="ChEBI" id="CHEBI:58401"/>
        <dbReference type="ChEBI" id="CHEBI:60377"/>
        <dbReference type="ChEBI" id="CHEBI:85356"/>
        <dbReference type="ChEBI" id="CHEBI:144472"/>
    </reaction>
</comment>
<comment type="cofactor">
    <cofactor evidence="1">
        <name>Mg(2+)</name>
        <dbReference type="ChEBI" id="CHEBI:18420"/>
    </cofactor>
    <text evidence="1">Contains a di-nuclear catalytic Mg(2+) center.</text>
</comment>
<comment type="pathway">
    <text evidence="7">Phospholipid metabolism; phosphatidylinositol phosphate biosynthesis.</text>
</comment>
<comment type="subunit">
    <text evidence="1">Homodimer.</text>
</comment>
<comment type="subcellular location">
    <subcellularLocation>
        <location evidence="2">Cell membrane</location>
        <topology evidence="2">Multi-pass membrane protein</topology>
    </subcellularLocation>
</comment>
<comment type="similarity">
    <text evidence="3 6">Belongs to the CDP-alcohol phosphatidyltransferase class-I family.</text>
</comment>
<reference key="1">
    <citation type="journal article" date="2004" name="Science">
        <title>The complete genome sequence of Propionibacterium acnes, a commensal of human skin.</title>
        <authorList>
            <person name="Brueggemann H."/>
            <person name="Henne A."/>
            <person name="Hoster F."/>
            <person name="Liesegang H."/>
            <person name="Wiezer A."/>
            <person name="Strittmatter A."/>
            <person name="Hujer S."/>
            <person name="Duerre P."/>
            <person name="Gottschalk G."/>
        </authorList>
    </citation>
    <scope>NUCLEOTIDE SEQUENCE [LARGE SCALE GENOMIC DNA]</scope>
    <source>
        <strain>DSM 16379 / KPA171202</strain>
    </source>
</reference>
<reference key="2">
    <citation type="journal article" date="2014" name="Biochem. Biophys. Res. Commun.">
        <title>Ubiquitous distribution of phosphatidylinositol phosphate synthase and archaetidylinositol phosphate synthase in Bacteria and Archaea, which contain inositol phospholipid.</title>
        <authorList>
            <person name="Morii H."/>
            <person name="Ogawa M."/>
            <person name="Fukuda K."/>
            <person name="Taniguchi H."/>
        </authorList>
    </citation>
    <scope>FUNCTION</scope>
    <scope>CATALYTIC ACTIVITY</scope>
    <scope>PATHWAY</scope>
</reference>
<dbReference type="EC" id="2.7.8.-" evidence="4"/>
<dbReference type="EMBL" id="AE017283">
    <property type="protein sequence ID" value="AAT82825.1"/>
    <property type="molecule type" value="Genomic_DNA"/>
</dbReference>
<dbReference type="SMR" id="Q6A8U1"/>
<dbReference type="EnsemblBacteria" id="AAT82825">
    <property type="protein sequence ID" value="AAT82825"/>
    <property type="gene ID" value="PPA1078"/>
</dbReference>
<dbReference type="KEGG" id="pac:PPA1078"/>
<dbReference type="eggNOG" id="COG0558">
    <property type="taxonomic scope" value="Bacteria"/>
</dbReference>
<dbReference type="HOGENOM" id="CLU_080384_0_1_11"/>
<dbReference type="UniPathway" id="UPA00220"/>
<dbReference type="Proteomes" id="UP000000603">
    <property type="component" value="Chromosome"/>
</dbReference>
<dbReference type="GO" id="GO:0005886">
    <property type="term" value="C:plasma membrane"/>
    <property type="evidence" value="ECO:0007669"/>
    <property type="project" value="UniProtKB-SubCell"/>
</dbReference>
<dbReference type="GO" id="GO:0000287">
    <property type="term" value="F:magnesium ion binding"/>
    <property type="evidence" value="ECO:0007669"/>
    <property type="project" value="UniProtKB-UniRule"/>
</dbReference>
<dbReference type="GO" id="GO:0016780">
    <property type="term" value="F:phosphotransferase activity, for other substituted phosphate groups"/>
    <property type="evidence" value="ECO:0007669"/>
    <property type="project" value="UniProtKB-UniRule"/>
</dbReference>
<dbReference type="GO" id="GO:0008654">
    <property type="term" value="P:phospholipid biosynthetic process"/>
    <property type="evidence" value="ECO:0007669"/>
    <property type="project" value="UniProtKB-UniRule"/>
</dbReference>
<dbReference type="Gene3D" id="1.20.120.1760">
    <property type="match status" value="1"/>
</dbReference>
<dbReference type="HAMAP" id="MF_02241">
    <property type="entry name" value="PIP_synthase"/>
    <property type="match status" value="1"/>
</dbReference>
<dbReference type="InterPro" id="IPR000462">
    <property type="entry name" value="CDP-OH_P_trans"/>
</dbReference>
<dbReference type="InterPro" id="IPR043130">
    <property type="entry name" value="CDP-OH_PTrfase_TM_dom"/>
</dbReference>
<dbReference type="InterPro" id="IPR048254">
    <property type="entry name" value="CDP_ALCOHOL_P_TRANSF_CS"/>
</dbReference>
<dbReference type="InterPro" id="IPR044268">
    <property type="entry name" value="PIP_synthase_PgsA1"/>
</dbReference>
<dbReference type="NCBIfam" id="NF045883">
    <property type="entry name" value="PIPSynth"/>
    <property type="match status" value="1"/>
</dbReference>
<dbReference type="Pfam" id="PF01066">
    <property type="entry name" value="CDP-OH_P_transf"/>
    <property type="match status" value="1"/>
</dbReference>
<dbReference type="PROSITE" id="PS00379">
    <property type="entry name" value="CDP_ALCOHOL_P_TRANSF"/>
    <property type="match status" value="1"/>
</dbReference>
<gene>
    <name evidence="8" type="ordered locus">PPA1078</name>
</gene>
<organism>
    <name type="scientific">Cutibacterium acnes (strain DSM 16379 / KPA171202)</name>
    <name type="common">Propionibacterium acnes</name>
    <dbReference type="NCBI Taxonomy" id="267747"/>
    <lineage>
        <taxon>Bacteria</taxon>
        <taxon>Bacillati</taxon>
        <taxon>Actinomycetota</taxon>
        <taxon>Actinomycetes</taxon>
        <taxon>Propionibacteriales</taxon>
        <taxon>Propionibacteriaceae</taxon>
        <taxon>Cutibacterium</taxon>
    </lineage>
</organism>
<keyword id="KW-1003">Cell membrane</keyword>
<keyword id="KW-0444">Lipid biosynthesis</keyword>
<keyword id="KW-0443">Lipid metabolism</keyword>
<keyword id="KW-0460">Magnesium</keyword>
<keyword id="KW-0472">Membrane</keyword>
<keyword id="KW-0479">Metal-binding</keyword>
<keyword id="KW-0594">Phospholipid biosynthesis</keyword>
<keyword id="KW-1208">Phospholipid metabolism</keyword>
<keyword id="KW-0808">Transferase</keyword>
<keyword id="KW-0812">Transmembrane</keyword>
<keyword id="KW-1133">Transmembrane helix</keyword>
<feature type="chain" id="PRO_0000448363" description="Phosphatidylinositol phosphate synthase">
    <location>
        <begin position="1"/>
        <end position="207"/>
    </location>
</feature>
<feature type="transmembrane region" description="Helical" evidence="2">
    <location>
        <begin position="21"/>
        <end position="44"/>
    </location>
</feature>
<feature type="transmembrane region" description="Helical" evidence="2">
    <location>
        <begin position="50"/>
        <end position="67"/>
    </location>
</feature>
<feature type="transmembrane region" description="Helical" evidence="2">
    <location>
        <begin position="88"/>
        <end position="106"/>
    </location>
</feature>
<feature type="transmembrane region" description="Helical" evidence="2">
    <location>
        <begin position="112"/>
        <end position="131"/>
    </location>
</feature>
<feature type="transmembrane region" description="Helical" evidence="2">
    <location>
        <begin position="152"/>
        <end position="170"/>
    </location>
</feature>
<feature type="transmembrane region" description="Helical" evidence="2">
    <location>
        <begin position="176"/>
        <end position="195"/>
    </location>
</feature>
<feature type="active site" description="Proton acceptor" evidence="1">
    <location>
        <position position="90"/>
    </location>
</feature>
<feature type="binding site" evidence="1">
    <location>
        <begin position="28"/>
        <end position="31"/>
    </location>
    <ligand>
        <name>a CDP-1,2-diacyl-sn-glycerol</name>
        <dbReference type="ChEBI" id="CHEBI:58332"/>
    </ligand>
</feature>
<feature type="binding site" evidence="1">
    <location>
        <position position="65"/>
    </location>
    <ligand>
        <name>Mg(2+)</name>
        <dbReference type="ChEBI" id="CHEBI:18420"/>
        <label>1</label>
    </ligand>
</feature>
<feature type="binding site" evidence="1">
    <location>
        <position position="65"/>
    </location>
    <ligand>
        <name>Mg(2+)</name>
        <dbReference type="ChEBI" id="CHEBI:18420"/>
        <label>2</label>
    </ligand>
</feature>
<feature type="binding site" evidence="1">
    <location>
        <position position="68"/>
    </location>
    <ligand>
        <name>Mg(2+)</name>
        <dbReference type="ChEBI" id="CHEBI:18420"/>
        <label>1</label>
    </ligand>
</feature>
<feature type="binding site" evidence="1">
    <location>
        <position position="69"/>
    </location>
    <ligand>
        <name>a CDP-1,2-diacyl-sn-glycerol</name>
        <dbReference type="ChEBI" id="CHEBI:58332"/>
    </ligand>
</feature>
<feature type="binding site" evidence="1">
    <location>
        <position position="73"/>
    </location>
    <ligand>
        <name>a CDP-1,2-diacyl-sn-glycerol</name>
        <dbReference type="ChEBI" id="CHEBI:58332"/>
    </ligand>
</feature>
<feature type="binding site" evidence="1">
    <location>
        <position position="79"/>
    </location>
    <ligand>
        <name>a CDP-1,2-diacyl-sn-glycerol</name>
        <dbReference type="ChEBI" id="CHEBI:58332"/>
    </ligand>
</feature>
<feature type="binding site" evidence="1">
    <location>
        <position position="86"/>
    </location>
    <ligand>
        <name>Mg(2+)</name>
        <dbReference type="ChEBI" id="CHEBI:18420"/>
        <label>1</label>
    </ligand>
</feature>
<feature type="binding site" evidence="1">
    <location>
        <position position="86"/>
    </location>
    <ligand>
        <name>Mg(2+)</name>
        <dbReference type="ChEBI" id="CHEBI:18420"/>
        <label>2</label>
    </ligand>
</feature>
<feature type="binding site" evidence="1">
    <location>
        <position position="90"/>
    </location>
    <ligand>
        <name>Mg(2+)</name>
        <dbReference type="ChEBI" id="CHEBI:18420"/>
        <label>2</label>
    </ligand>
</feature>
<name>PIPS_CUTAK</name>